<sequence>MKLTSKGRYAVTAMLDVALHSQKSPVPLADISERQGISLSYLEQLFSKLRKAGLVASVRGPGGGYRLGADAFTISIGTVIAAVDESVDATKCQGKGDCQGGTRCLTHTLWRDLSSRITDFLNNITLGELMSDNEVIEISDRQDIDLAVNHGLANKTINTAPIGVNFRS</sequence>
<evidence type="ECO:0000255" key="1">
    <source>
        <dbReference type="HAMAP-Rule" id="MF_01176"/>
    </source>
</evidence>
<evidence type="ECO:0000305" key="2"/>
<gene>
    <name evidence="1" type="primary">iscR</name>
    <name type="ordered locus">VV0754</name>
</gene>
<organism>
    <name type="scientific">Vibrio vulnificus (strain YJ016)</name>
    <dbReference type="NCBI Taxonomy" id="196600"/>
    <lineage>
        <taxon>Bacteria</taxon>
        <taxon>Pseudomonadati</taxon>
        <taxon>Pseudomonadota</taxon>
        <taxon>Gammaproteobacteria</taxon>
        <taxon>Vibrionales</taxon>
        <taxon>Vibrionaceae</taxon>
        <taxon>Vibrio</taxon>
    </lineage>
</organism>
<dbReference type="EMBL" id="BA000037">
    <property type="protein sequence ID" value="BAC93518.1"/>
    <property type="status" value="ALT_INIT"/>
    <property type="molecule type" value="Genomic_DNA"/>
</dbReference>
<dbReference type="RefSeq" id="WP_013572351.1">
    <property type="nucleotide sequence ID" value="NC_005139.1"/>
</dbReference>
<dbReference type="SMR" id="Q7MNG3"/>
<dbReference type="STRING" id="672.VV93_v1c07000"/>
<dbReference type="GeneID" id="93894744"/>
<dbReference type="KEGG" id="vvy:VV0754"/>
<dbReference type="eggNOG" id="COG1959">
    <property type="taxonomic scope" value="Bacteria"/>
</dbReference>
<dbReference type="HOGENOM" id="CLU_107144_0_0_6"/>
<dbReference type="Proteomes" id="UP000002675">
    <property type="component" value="Chromosome I"/>
</dbReference>
<dbReference type="GO" id="GO:0005829">
    <property type="term" value="C:cytosol"/>
    <property type="evidence" value="ECO:0007669"/>
    <property type="project" value="TreeGrafter"/>
</dbReference>
<dbReference type="GO" id="GO:0051537">
    <property type="term" value="F:2 iron, 2 sulfur cluster binding"/>
    <property type="evidence" value="ECO:0007669"/>
    <property type="project" value="UniProtKB-KW"/>
</dbReference>
<dbReference type="GO" id="GO:0003700">
    <property type="term" value="F:DNA-binding transcription factor activity"/>
    <property type="evidence" value="ECO:0007669"/>
    <property type="project" value="UniProtKB-UniRule"/>
</dbReference>
<dbReference type="GO" id="GO:0003690">
    <property type="term" value="F:double-stranded DNA binding"/>
    <property type="evidence" value="ECO:0007669"/>
    <property type="project" value="UniProtKB-UniRule"/>
</dbReference>
<dbReference type="GO" id="GO:0005506">
    <property type="term" value="F:iron ion binding"/>
    <property type="evidence" value="ECO:0007669"/>
    <property type="project" value="UniProtKB-UniRule"/>
</dbReference>
<dbReference type="FunFam" id="1.10.10.10:FF:000026">
    <property type="entry name" value="HTH-type transcriptional regulator IscR"/>
    <property type="match status" value="1"/>
</dbReference>
<dbReference type="Gene3D" id="1.10.10.10">
    <property type="entry name" value="Winged helix-like DNA-binding domain superfamily/Winged helix DNA-binding domain"/>
    <property type="match status" value="1"/>
</dbReference>
<dbReference type="HAMAP" id="MF_01176">
    <property type="entry name" value="HTH_type_IscR"/>
    <property type="match status" value="1"/>
</dbReference>
<dbReference type="InterPro" id="IPR010242">
    <property type="entry name" value="TF_HTH_IscR"/>
</dbReference>
<dbReference type="InterPro" id="IPR030489">
    <property type="entry name" value="TR_Rrf2-type_CS"/>
</dbReference>
<dbReference type="InterPro" id="IPR000944">
    <property type="entry name" value="Tscrpt_reg_Rrf2"/>
</dbReference>
<dbReference type="InterPro" id="IPR036388">
    <property type="entry name" value="WH-like_DNA-bd_sf"/>
</dbReference>
<dbReference type="InterPro" id="IPR036390">
    <property type="entry name" value="WH_DNA-bd_sf"/>
</dbReference>
<dbReference type="NCBIfam" id="TIGR02010">
    <property type="entry name" value="IscR"/>
    <property type="match status" value="1"/>
</dbReference>
<dbReference type="NCBIfam" id="NF008110">
    <property type="entry name" value="PRK10857.1"/>
    <property type="match status" value="1"/>
</dbReference>
<dbReference type="NCBIfam" id="TIGR00738">
    <property type="entry name" value="rrf2_super"/>
    <property type="match status" value="1"/>
</dbReference>
<dbReference type="PANTHER" id="PTHR33221:SF5">
    <property type="entry name" value="HTH-TYPE TRANSCRIPTIONAL REGULATOR ISCR"/>
    <property type="match status" value="1"/>
</dbReference>
<dbReference type="PANTHER" id="PTHR33221">
    <property type="entry name" value="WINGED HELIX-TURN-HELIX TRANSCRIPTIONAL REGULATOR, RRF2 FAMILY"/>
    <property type="match status" value="1"/>
</dbReference>
<dbReference type="Pfam" id="PF02082">
    <property type="entry name" value="Rrf2"/>
    <property type="match status" value="1"/>
</dbReference>
<dbReference type="SUPFAM" id="SSF46785">
    <property type="entry name" value="Winged helix' DNA-binding domain"/>
    <property type="match status" value="1"/>
</dbReference>
<dbReference type="PROSITE" id="PS01332">
    <property type="entry name" value="HTH_RRF2_1"/>
    <property type="match status" value="1"/>
</dbReference>
<dbReference type="PROSITE" id="PS51197">
    <property type="entry name" value="HTH_RRF2_2"/>
    <property type="match status" value="1"/>
</dbReference>
<feature type="chain" id="PRO_0000268933" description="HTH-type transcriptional regulator IscR">
    <location>
        <begin position="1"/>
        <end position="168"/>
    </location>
</feature>
<feature type="domain" description="HTH rrf2-type" evidence="1">
    <location>
        <begin position="2"/>
        <end position="131"/>
    </location>
</feature>
<feature type="DNA-binding region" description="H-T-H motif" evidence="1">
    <location>
        <begin position="28"/>
        <end position="51"/>
    </location>
</feature>
<feature type="binding site" evidence="1">
    <location>
        <position position="92"/>
    </location>
    <ligand>
        <name>[2Fe-2S] cluster</name>
        <dbReference type="ChEBI" id="CHEBI:190135"/>
    </ligand>
</feature>
<feature type="binding site" evidence="1">
    <location>
        <position position="98"/>
    </location>
    <ligand>
        <name>[2Fe-2S] cluster</name>
        <dbReference type="ChEBI" id="CHEBI:190135"/>
    </ligand>
</feature>
<feature type="binding site" evidence="1">
    <location>
        <position position="104"/>
    </location>
    <ligand>
        <name>[2Fe-2S] cluster</name>
        <dbReference type="ChEBI" id="CHEBI:190135"/>
    </ligand>
</feature>
<comment type="function">
    <text evidence="1">Regulates the transcription of several operons and genes involved in the biogenesis of Fe-S clusters and Fe-S-containing proteins.</text>
</comment>
<comment type="cofactor">
    <cofactor evidence="1">
        <name>[2Fe-2S] cluster</name>
        <dbReference type="ChEBI" id="CHEBI:190135"/>
    </cofactor>
    <text evidence="1">Binds 1 [2Fe-2S] cluster.</text>
</comment>
<comment type="sequence caution" evidence="2">
    <conflict type="erroneous initiation">
        <sequence resource="EMBL-CDS" id="BAC93518"/>
    </conflict>
</comment>
<reference key="1">
    <citation type="journal article" date="2003" name="Genome Res.">
        <title>Comparative genome analysis of Vibrio vulnificus, a marine pathogen.</title>
        <authorList>
            <person name="Chen C.-Y."/>
            <person name="Wu K.-M."/>
            <person name="Chang Y.-C."/>
            <person name="Chang C.-H."/>
            <person name="Tsai H.-C."/>
            <person name="Liao T.-L."/>
            <person name="Liu Y.-M."/>
            <person name="Chen H.-J."/>
            <person name="Shen A.B.-T."/>
            <person name="Li J.-C."/>
            <person name="Su T.-L."/>
            <person name="Shao C.-P."/>
            <person name="Lee C.-T."/>
            <person name="Hor L.-I."/>
            <person name="Tsai S.-F."/>
        </authorList>
    </citation>
    <scope>NUCLEOTIDE SEQUENCE [LARGE SCALE GENOMIC DNA]</scope>
    <source>
        <strain>YJ016</strain>
    </source>
</reference>
<name>ISCR_VIBVY</name>
<accession>Q7MNG3</accession>
<keyword id="KW-0001">2Fe-2S</keyword>
<keyword id="KW-0010">Activator</keyword>
<keyword id="KW-0238">DNA-binding</keyword>
<keyword id="KW-0408">Iron</keyword>
<keyword id="KW-0411">Iron-sulfur</keyword>
<keyword id="KW-0479">Metal-binding</keyword>
<keyword id="KW-0678">Repressor</keyword>
<keyword id="KW-0804">Transcription</keyword>
<keyword id="KW-0805">Transcription regulation</keyword>
<proteinExistence type="inferred from homology"/>
<protein>
    <recommendedName>
        <fullName evidence="1">HTH-type transcriptional regulator IscR</fullName>
    </recommendedName>
</protein>